<dbReference type="EC" id="2.6.1.87" evidence="1"/>
<dbReference type="EMBL" id="FM209186">
    <property type="protein sequence ID" value="CAW26209.1"/>
    <property type="molecule type" value="Genomic_DNA"/>
</dbReference>
<dbReference type="RefSeq" id="WP_003119540.1">
    <property type="nucleotide sequence ID" value="NC_011770.1"/>
</dbReference>
<dbReference type="SMR" id="B7VBN4"/>
<dbReference type="KEGG" id="pag:PLES_14811"/>
<dbReference type="HOGENOM" id="CLU_033332_0_3_6"/>
<dbReference type="UniPathway" id="UPA00030"/>
<dbReference type="UniPathway" id="UPA00032">
    <property type="reaction ID" value="UER00493"/>
</dbReference>
<dbReference type="GO" id="GO:0016020">
    <property type="term" value="C:membrane"/>
    <property type="evidence" value="ECO:0007669"/>
    <property type="project" value="GOC"/>
</dbReference>
<dbReference type="GO" id="GO:0030170">
    <property type="term" value="F:pyridoxal phosphate binding"/>
    <property type="evidence" value="ECO:0007669"/>
    <property type="project" value="TreeGrafter"/>
</dbReference>
<dbReference type="GO" id="GO:0099620">
    <property type="term" value="F:UDP-4-amino-4-deoxy-L-arabinose aminotransferase"/>
    <property type="evidence" value="ECO:0007669"/>
    <property type="project" value="UniProtKB-EC"/>
</dbReference>
<dbReference type="GO" id="GO:0009245">
    <property type="term" value="P:lipid A biosynthetic process"/>
    <property type="evidence" value="ECO:0007669"/>
    <property type="project" value="UniProtKB-KW"/>
</dbReference>
<dbReference type="GO" id="GO:0009103">
    <property type="term" value="P:lipopolysaccharide biosynthetic process"/>
    <property type="evidence" value="ECO:0007669"/>
    <property type="project" value="UniProtKB-UniRule"/>
</dbReference>
<dbReference type="GO" id="GO:0046677">
    <property type="term" value="P:response to antibiotic"/>
    <property type="evidence" value="ECO:0007669"/>
    <property type="project" value="UniProtKB-KW"/>
</dbReference>
<dbReference type="CDD" id="cd00616">
    <property type="entry name" value="AHBA_syn"/>
    <property type="match status" value="1"/>
</dbReference>
<dbReference type="FunFam" id="3.40.640.10:FF:000040">
    <property type="entry name" value="UDP-4-amino-4-deoxy-L-arabinose--oxoglutarate aminotransferase"/>
    <property type="match status" value="1"/>
</dbReference>
<dbReference type="FunFam" id="3.90.1150.10:FF:000030">
    <property type="entry name" value="UDP-4-amino-4-deoxy-L-arabinose--oxoglutarate aminotransferase"/>
    <property type="match status" value="1"/>
</dbReference>
<dbReference type="Gene3D" id="3.90.1150.10">
    <property type="entry name" value="Aspartate Aminotransferase, domain 1"/>
    <property type="match status" value="1"/>
</dbReference>
<dbReference type="Gene3D" id="3.40.640.10">
    <property type="entry name" value="Type I PLP-dependent aspartate aminotransferase-like (Major domain)"/>
    <property type="match status" value="1"/>
</dbReference>
<dbReference type="HAMAP" id="MF_01167">
    <property type="entry name" value="ArnB_transfer"/>
    <property type="match status" value="1"/>
</dbReference>
<dbReference type="InterPro" id="IPR022850">
    <property type="entry name" value="ArnB_NH2Trfase"/>
</dbReference>
<dbReference type="InterPro" id="IPR000653">
    <property type="entry name" value="DegT/StrS_aminotransferase"/>
</dbReference>
<dbReference type="InterPro" id="IPR015424">
    <property type="entry name" value="PyrdxlP-dep_Trfase"/>
</dbReference>
<dbReference type="InterPro" id="IPR015421">
    <property type="entry name" value="PyrdxlP-dep_Trfase_major"/>
</dbReference>
<dbReference type="InterPro" id="IPR015422">
    <property type="entry name" value="PyrdxlP-dep_Trfase_small"/>
</dbReference>
<dbReference type="NCBIfam" id="NF008658">
    <property type="entry name" value="PRK11658.1"/>
    <property type="match status" value="1"/>
</dbReference>
<dbReference type="PANTHER" id="PTHR30244:SF34">
    <property type="entry name" value="DTDP-4-AMINO-4,6-DIDEOXYGALACTOSE TRANSAMINASE"/>
    <property type="match status" value="1"/>
</dbReference>
<dbReference type="PANTHER" id="PTHR30244">
    <property type="entry name" value="TRANSAMINASE"/>
    <property type="match status" value="1"/>
</dbReference>
<dbReference type="Pfam" id="PF01041">
    <property type="entry name" value="DegT_DnrJ_EryC1"/>
    <property type="match status" value="1"/>
</dbReference>
<dbReference type="PIRSF" id="PIRSF000390">
    <property type="entry name" value="PLP_StrS"/>
    <property type="match status" value="1"/>
</dbReference>
<dbReference type="SUPFAM" id="SSF53383">
    <property type="entry name" value="PLP-dependent transferases"/>
    <property type="match status" value="1"/>
</dbReference>
<reference key="1">
    <citation type="journal article" date="2009" name="Genome Res.">
        <title>Newly introduced genomic prophage islands are critical determinants of in vivo competitiveness in the Liverpool epidemic strain of Pseudomonas aeruginosa.</title>
        <authorList>
            <person name="Winstanley C."/>
            <person name="Langille M.G.I."/>
            <person name="Fothergill J.L."/>
            <person name="Kukavica-Ibrulj I."/>
            <person name="Paradis-Bleau C."/>
            <person name="Sanschagrin F."/>
            <person name="Thomson N.R."/>
            <person name="Winsor G.L."/>
            <person name="Quail M.A."/>
            <person name="Lennard N."/>
            <person name="Bignell A."/>
            <person name="Clarke L."/>
            <person name="Seeger K."/>
            <person name="Saunders D."/>
            <person name="Harris D."/>
            <person name="Parkhill J."/>
            <person name="Hancock R.E.W."/>
            <person name="Brinkman F.S.L."/>
            <person name="Levesque R.C."/>
        </authorList>
    </citation>
    <scope>NUCLEOTIDE SEQUENCE [LARGE SCALE GENOMIC DNA]</scope>
    <source>
        <strain>LESB58</strain>
    </source>
</reference>
<keyword id="KW-0032">Aminotransferase</keyword>
<keyword id="KW-0046">Antibiotic resistance</keyword>
<keyword id="KW-0441">Lipid A biosynthesis</keyword>
<keyword id="KW-0444">Lipid biosynthesis</keyword>
<keyword id="KW-0443">Lipid metabolism</keyword>
<keyword id="KW-0448">Lipopolysaccharide biosynthesis</keyword>
<keyword id="KW-0663">Pyridoxal phosphate</keyword>
<keyword id="KW-0808">Transferase</keyword>
<sequence length="382" mass="41839">MSLDFLPFSRPSIGEDEIAAVEQVLRSGWITTGPKNQELEQRFAERLGCRHAVALSSATGALHVTLLALGIGPGDEVITPSLTWVSTANVITLLGATPVFVDVDRDTLMCSAQAVEAAIGPRTRAIVPVHYAGSTLDLEGLRTVAGRHGIALVEDAAHAVGSEYRGRPVGSRGTAIFSFHAIKNLTCAEGAMFVSDDSALAERVRRLKFHGLGVDAYDRLSHGRKPQAEVIEPGFKYNLADLNAALALVQLKRLDALNARRQALAERYLERLAGLPLAPLGLPAHKQRHAWHLFILRIDAEACGLGRDAFMEALKARGIGSGIHFIASHLHHYYRQRQPRLSLPNSEWNSARLCSIPLFPDMRDDDIERVARAIEEILEKRR</sequence>
<gene>
    <name evidence="1" type="primary">arnB</name>
    <name type="ordered locus">PLES_14811</name>
</gene>
<evidence type="ECO:0000255" key="1">
    <source>
        <dbReference type="HAMAP-Rule" id="MF_01167"/>
    </source>
</evidence>
<accession>B7VBN4</accession>
<organism>
    <name type="scientific">Pseudomonas aeruginosa (strain LESB58)</name>
    <dbReference type="NCBI Taxonomy" id="557722"/>
    <lineage>
        <taxon>Bacteria</taxon>
        <taxon>Pseudomonadati</taxon>
        <taxon>Pseudomonadota</taxon>
        <taxon>Gammaproteobacteria</taxon>
        <taxon>Pseudomonadales</taxon>
        <taxon>Pseudomonadaceae</taxon>
        <taxon>Pseudomonas</taxon>
    </lineage>
</organism>
<comment type="function">
    <text evidence="1">Catalyzes the conversion of UDP-4-keto-arabinose (UDP-Ara4O) to UDP-4-amino-4-deoxy-L-arabinose (UDP-L-Ara4N). The modified arabinose is attached to lipid A and is required for resistance to polymyxin and cationic antimicrobial peptides.</text>
</comment>
<comment type="catalytic activity">
    <reaction evidence="1">
        <text>UDP-4-amino-4-deoxy-beta-L-arabinose + 2-oxoglutarate = UDP-beta-L-threo-pentopyranos-4-ulose + L-glutamate</text>
        <dbReference type="Rhea" id="RHEA:24710"/>
        <dbReference type="ChEBI" id="CHEBI:16810"/>
        <dbReference type="ChEBI" id="CHEBI:29985"/>
        <dbReference type="ChEBI" id="CHEBI:58708"/>
        <dbReference type="ChEBI" id="CHEBI:58710"/>
        <dbReference type="EC" id="2.6.1.87"/>
    </reaction>
</comment>
<comment type="cofactor">
    <cofactor evidence="1">
        <name>pyridoxal 5'-phosphate</name>
        <dbReference type="ChEBI" id="CHEBI:597326"/>
    </cofactor>
</comment>
<comment type="pathway">
    <text evidence="1">Nucleotide-sugar biosynthesis; UDP-4-deoxy-4-formamido-beta-L-arabinose biosynthesis; UDP-4-deoxy-4-formamido-beta-L-arabinose from UDP-alpha-D-glucuronate: step 2/3.</text>
</comment>
<comment type="pathway">
    <text evidence="1">Bacterial outer membrane biogenesis; lipopolysaccharide biosynthesis.</text>
</comment>
<comment type="subunit">
    <text evidence="1">Homodimer.</text>
</comment>
<comment type="similarity">
    <text evidence="1">Belongs to the DegT/DnrJ/EryC1 family. ArnB subfamily.</text>
</comment>
<feature type="chain" id="PRO_1000137961" description="UDP-4-amino-4-deoxy-L-arabinose--oxoglutarate aminotransferase">
    <location>
        <begin position="1"/>
        <end position="382"/>
    </location>
</feature>
<feature type="modified residue" description="N6-(pyridoxal phosphate)lysine" evidence="1">
    <location>
        <position position="183"/>
    </location>
</feature>
<proteinExistence type="inferred from homology"/>
<protein>
    <recommendedName>
        <fullName evidence="1">UDP-4-amino-4-deoxy-L-arabinose--oxoglutarate aminotransferase</fullName>
        <ecNumber evidence="1">2.6.1.87</ecNumber>
    </recommendedName>
    <alternativeName>
        <fullName evidence="1">UDP-(beta-L-threo-pentapyranosyl-4''-ulose diphosphate) aminotransferase</fullName>
        <shortName evidence="1">UDP-Ara4O aminotransferase</shortName>
    </alternativeName>
    <alternativeName>
        <fullName evidence="1">UDP-4-amino-4-deoxy-L-arabinose aminotransferase</fullName>
    </alternativeName>
</protein>
<name>ARNB_PSEA8</name>